<accession>Q473D3</accession>
<organism>
    <name type="scientific">Cupriavidus pinatubonensis (strain JMP 134 / LMG 1197)</name>
    <name type="common">Cupriavidus necator (strain JMP 134)</name>
    <dbReference type="NCBI Taxonomy" id="264198"/>
    <lineage>
        <taxon>Bacteria</taxon>
        <taxon>Pseudomonadati</taxon>
        <taxon>Pseudomonadota</taxon>
        <taxon>Betaproteobacteria</taxon>
        <taxon>Burkholderiales</taxon>
        <taxon>Burkholderiaceae</taxon>
        <taxon>Cupriavidus</taxon>
    </lineage>
</organism>
<proteinExistence type="inferred from homology"/>
<comment type="catalytic activity">
    <reaction evidence="1">
        <text>tRNA(Cys) + L-cysteine + ATP = L-cysteinyl-tRNA(Cys) + AMP + diphosphate</text>
        <dbReference type="Rhea" id="RHEA:17773"/>
        <dbReference type="Rhea" id="RHEA-COMP:9661"/>
        <dbReference type="Rhea" id="RHEA-COMP:9679"/>
        <dbReference type="ChEBI" id="CHEBI:30616"/>
        <dbReference type="ChEBI" id="CHEBI:33019"/>
        <dbReference type="ChEBI" id="CHEBI:35235"/>
        <dbReference type="ChEBI" id="CHEBI:78442"/>
        <dbReference type="ChEBI" id="CHEBI:78517"/>
        <dbReference type="ChEBI" id="CHEBI:456215"/>
        <dbReference type="EC" id="6.1.1.16"/>
    </reaction>
</comment>
<comment type="cofactor">
    <cofactor evidence="1">
        <name>Zn(2+)</name>
        <dbReference type="ChEBI" id="CHEBI:29105"/>
    </cofactor>
    <text evidence="1">Binds 1 zinc ion per subunit.</text>
</comment>
<comment type="subunit">
    <text evidence="1">Monomer.</text>
</comment>
<comment type="subcellular location">
    <subcellularLocation>
        <location evidence="1">Cytoplasm</location>
    </subcellularLocation>
</comment>
<comment type="similarity">
    <text evidence="1">Belongs to the class-I aminoacyl-tRNA synthetase family.</text>
</comment>
<reference key="1">
    <citation type="journal article" date="2010" name="PLoS ONE">
        <title>The complete multipartite genome sequence of Cupriavidus necator JMP134, a versatile pollutant degrader.</title>
        <authorList>
            <person name="Lykidis A."/>
            <person name="Perez-Pantoja D."/>
            <person name="Ledger T."/>
            <person name="Mavromatis K."/>
            <person name="Anderson I.J."/>
            <person name="Ivanova N.N."/>
            <person name="Hooper S.D."/>
            <person name="Lapidus A."/>
            <person name="Lucas S."/>
            <person name="Gonzalez B."/>
            <person name="Kyrpides N.C."/>
        </authorList>
    </citation>
    <scope>NUCLEOTIDE SEQUENCE [LARGE SCALE GENOMIC DNA]</scope>
    <source>
        <strain>JMP134 / LMG 1197</strain>
    </source>
</reference>
<keyword id="KW-0030">Aminoacyl-tRNA synthetase</keyword>
<keyword id="KW-0067">ATP-binding</keyword>
<keyword id="KW-0963">Cytoplasm</keyword>
<keyword id="KW-0436">Ligase</keyword>
<keyword id="KW-0479">Metal-binding</keyword>
<keyword id="KW-0547">Nucleotide-binding</keyword>
<keyword id="KW-0648">Protein biosynthesis</keyword>
<keyword id="KW-0862">Zinc</keyword>
<protein>
    <recommendedName>
        <fullName evidence="1">Cysteine--tRNA ligase</fullName>
        <ecNumber evidence="1">6.1.1.16</ecNumber>
    </recommendedName>
    <alternativeName>
        <fullName evidence="1">Cysteinyl-tRNA synthetase</fullName>
        <shortName evidence="1">CysRS</shortName>
    </alternativeName>
</protein>
<name>SYC_CUPPJ</name>
<dbReference type="EC" id="6.1.1.16" evidence="1"/>
<dbReference type="EMBL" id="CP000090">
    <property type="protein sequence ID" value="AAZ60500.1"/>
    <property type="molecule type" value="Genomic_DNA"/>
</dbReference>
<dbReference type="SMR" id="Q473D3"/>
<dbReference type="STRING" id="264198.Reut_A1122"/>
<dbReference type="KEGG" id="reu:Reut_A1122"/>
<dbReference type="eggNOG" id="COG0215">
    <property type="taxonomic scope" value="Bacteria"/>
</dbReference>
<dbReference type="HOGENOM" id="CLU_013528_0_1_4"/>
<dbReference type="OrthoDB" id="9815130at2"/>
<dbReference type="GO" id="GO:0005829">
    <property type="term" value="C:cytosol"/>
    <property type="evidence" value="ECO:0007669"/>
    <property type="project" value="TreeGrafter"/>
</dbReference>
<dbReference type="GO" id="GO:0005524">
    <property type="term" value="F:ATP binding"/>
    <property type="evidence" value="ECO:0007669"/>
    <property type="project" value="UniProtKB-UniRule"/>
</dbReference>
<dbReference type="GO" id="GO:0004817">
    <property type="term" value="F:cysteine-tRNA ligase activity"/>
    <property type="evidence" value="ECO:0007669"/>
    <property type="project" value="UniProtKB-UniRule"/>
</dbReference>
<dbReference type="GO" id="GO:0008270">
    <property type="term" value="F:zinc ion binding"/>
    <property type="evidence" value="ECO:0007669"/>
    <property type="project" value="UniProtKB-UniRule"/>
</dbReference>
<dbReference type="GO" id="GO:0006423">
    <property type="term" value="P:cysteinyl-tRNA aminoacylation"/>
    <property type="evidence" value="ECO:0007669"/>
    <property type="project" value="UniProtKB-UniRule"/>
</dbReference>
<dbReference type="CDD" id="cd07963">
    <property type="entry name" value="Anticodon_Ia_Cys"/>
    <property type="match status" value="1"/>
</dbReference>
<dbReference type="CDD" id="cd00672">
    <property type="entry name" value="CysRS_core"/>
    <property type="match status" value="1"/>
</dbReference>
<dbReference type="FunFam" id="3.40.50.620:FF:000009">
    <property type="entry name" value="Cysteine--tRNA ligase"/>
    <property type="match status" value="1"/>
</dbReference>
<dbReference type="Gene3D" id="1.20.120.1910">
    <property type="entry name" value="Cysteine-tRNA ligase, C-terminal anti-codon recognition domain"/>
    <property type="match status" value="1"/>
</dbReference>
<dbReference type="Gene3D" id="3.40.50.620">
    <property type="entry name" value="HUPs"/>
    <property type="match status" value="1"/>
</dbReference>
<dbReference type="HAMAP" id="MF_00041">
    <property type="entry name" value="Cys_tRNA_synth"/>
    <property type="match status" value="1"/>
</dbReference>
<dbReference type="InterPro" id="IPR015803">
    <property type="entry name" value="Cys-tRNA-ligase"/>
</dbReference>
<dbReference type="InterPro" id="IPR015273">
    <property type="entry name" value="Cys-tRNA-synt_Ia_DALR"/>
</dbReference>
<dbReference type="InterPro" id="IPR024909">
    <property type="entry name" value="Cys-tRNA/MSH_ligase"/>
</dbReference>
<dbReference type="InterPro" id="IPR056411">
    <property type="entry name" value="CysS_C"/>
</dbReference>
<dbReference type="InterPro" id="IPR014729">
    <property type="entry name" value="Rossmann-like_a/b/a_fold"/>
</dbReference>
<dbReference type="InterPro" id="IPR032678">
    <property type="entry name" value="tRNA-synt_1_cat_dom"/>
</dbReference>
<dbReference type="InterPro" id="IPR009080">
    <property type="entry name" value="tRNAsynth_Ia_anticodon-bd"/>
</dbReference>
<dbReference type="NCBIfam" id="TIGR00435">
    <property type="entry name" value="cysS"/>
    <property type="match status" value="1"/>
</dbReference>
<dbReference type="PANTHER" id="PTHR10890:SF3">
    <property type="entry name" value="CYSTEINE--TRNA LIGASE, CYTOPLASMIC"/>
    <property type="match status" value="1"/>
</dbReference>
<dbReference type="PANTHER" id="PTHR10890">
    <property type="entry name" value="CYSTEINYL-TRNA SYNTHETASE"/>
    <property type="match status" value="1"/>
</dbReference>
<dbReference type="Pfam" id="PF23493">
    <property type="entry name" value="CysS_C"/>
    <property type="match status" value="1"/>
</dbReference>
<dbReference type="Pfam" id="PF09190">
    <property type="entry name" value="DALR_2"/>
    <property type="match status" value="1"/>
</dbReference>
<dbReference type="Pfam" id="PF01406">
    <property type="entry name" value="tRNA-synt_1e"/>
    <property type="match status" value="1"/>
</dbReference>
<dbReference type="PRINTS" id="PR00983">
    <property type="entry name" value="TRNASYNTHCYS"/>
</dbReference>
<dbReference type="SMART" id="SM00840">
    <property type="entry name" value="DALR_2"/>
    <property type="match status" value="1"/>
</dbReference>
<dbReference type="SUPFAM" id="SSF47323">
    <property type="entry name" value="Anticodon-binding domain of a subclass of class I aminoacyl-tRNA synthetases"/>
    <property type="match status" value="1"/>
</dbReference>
<dbReference type="SUPFAM" id="SSF52374">
    <property type="entry name" value="Nucleotidylyl transferase"/>
    <property type="match status" value="1"/>
</dbReference>
<feature type="chain" id="PRO_0000240942" description="Cysteine--tRNA ligase">
    <location>
        <begin position="1"/>
        <end position="462"/>
    </location>
</feature>
<feature type="short sequence motif" description="'HIGH' region">
    <location>
        <begin position="32"/>
        <end position="42"/>
    </location>
</feature>
<feature type="short sequence motif" description="'KMSKS' region">
    <location>
        <begin position="271"/>
        <end position="275"/>
    </location>
</feature>
<feature type="binding site" evidence="1">
    <location>
        <position position="30"/>
    </location>
    <ligand>
        <name>Zn(2+)</name>
        <dbReference type="ChEBI" id="CHEBI:29105"/>
    </ligand>
</feature>
<feature type="binding site" evidence="1">
    <location>
        <position position="214"/>
    </location>
    <ligand>
        <name>Zn(2+)</name>
        <dbReference type="ChEBI" id="CHEBI:29105"/>
    </ligand>
</feature>
<feature type="binding site" evidence="1">
    <location>
        <position position="239"/>
    </location>
    <ligand>
        <name>Zn(2+)</name>
        <dbReference type="ChEBI" id="CHEBI:29105"/>
    </ligand>
</feature>
<feature type="binding site" evidence="1">
    <location>
        <position position="243"/>
    </location>
    <ligand>
        <name>Zn(2+)</name>
        <dbReference type="ChEBI" id="CHEBI:29105"/>
    </ligand>
</feature>
<feature type="binding site" evidence="1">
    <location>
        <position position="274"/>
    </location>
    <ligand>
        <name>ATP</name>
        <dbReference type="ChEBI" id="CHEBI:30616"/>
    </ligand>
</feature>
<gene>
    <name evidence="1" type="primary">cysS</name>
    <name type="ordered locus">Reut_A1122</name>
</gene>
<sequence>MQLLNIYNTLAREKQPFVPIEPGKVRMYVCGMTVYDYCHVGHARVMVVFDMVHRWLRAAGYDVTFVQNITDIDDKIIRRAAENGETIGQLTTRFIQYMHEDADALGIVRPDHEPRATDYVPQMLDLIGKLEANGLAYQATDGDVNYSVRKFDGYGKLSGKSLEDLRAGERVTANDAKQDPLDFVLWKSAKESEPPESKWNSKWGMGRPGWHIECSAMSCTLLGEHFDIHGGGADLQFPHHENEIAQSEGASGKPFVNVWMHNGFVRVNDEKMSKSLGNFFTIREVLKEYDAEVVRFFILRAHYRSPLNYSDAHLDDARHALTRLYTALKDTQPGGYAVDWEEAHAKRFAEAMCDDFNTPIAVSVLFDLASEVNRTGSSVAARQLKGLAGTLGLLERDPHTFLQGGKKVDGPSPDEIEGLIAARKTAKAERNFAEADRIRADLLAAGIVLEDKPGGATEWRRA</sequence>
<evidence type="ECO:0000255" key="1">
    <source>
        <dbReference type="HAMAP-Rule" id="MF_00041"/>
    </source>
</evidence>